<feature type="chain" id="PRO_1000145210" description="Urease accessory protein UreG">
    <location>
        <begin position="1"/>
        <end position="203"/>
    </location>
</feature>
<feature type="binding site" evidence="1">
    <location>
        <begin position="14"/>
        <end position="21"/>
    </location>
    <ligand>
        <name>GTP</name>
        <dbReference type="ChEBI" id="CHEBI:37565"/>
    </ligand>
</feature>
<accession>Q2K522</accession>
<comment type="function">
    <text evidence="1">Facilitates the functional incorporation of the urease nickel metallocenter. This process requires GTP hydrolysis, probably effectuated by UreG.</text>
</comment>
<comment type="subunit">
    <text evidence="1">Homodimer. UreD, UreF and UreG form a complex that acts as a GTP-hydrolysis-dependent molecular chaperone, activating the urease apoprotein by helping to assemble the nickel containing metallocenter of UreC. The UreE protein probably delivers the nickel.</text>
</comment>
<comment type="subcellular location">
    <subcellularLocation>
        <location evidence="1">Cytoplasm</location>
    </subcellularLocation>
</comment>
<comment type="similarity">
    <text evidence="1">Belongs to the SIMIBI class G3E GTPase family. UreG subfamily.</text>
</comment>
<organism>
    <name type="scientific">Rhizobium etli (strain ATCC 51251 / DSM 11541 / JCM 21823 / NBRC 15573 / CFN 42)</name>
    <dbReference type="NCBI Taxonomy" id="347834"/>
    <lineage>
        <taxon>Bacteria</taxon>
        <taxon>Pseudomonadati</taxon>
        <taxon>Pseudomonadota</taxon>
        <taxon>Alphaproteobacteria</taxon>
        <taxon>Hyphomicrobiales</taxon>
        <taxon>Rhizobiaceae</taxon>
        <taxon>Rhizobium/Agrobacterium group</taxon>
        <taxon>Rhizobium</taxon>
    </lineage>
</organism>
<proteinExistence type="inferred from homology"/>
<gene>
    <name evidence="1" type="primary">ureG</name>
    <name type="ordered locus">RHE_CH03300</name>
</gene>
<sequence>MKSRNGPLRVGIGGPVGSGKTALTEKLCKAMRDDYSVAVVTNDIYTTEDAEALVRMQALPSDRIVGVETGGCPHTAIREDATINLQAIAGLNERIPDLDVVFIESGGDNLAATFSPDLADITIYVISVCQGEEIPRKGGPGITRSDLLVINKKDLAPYVGADLEVMDRDATRMRASRPFVFSDMKRGDGVSSIVNFLREQGGL</sequence>
<name>UREG_RHIEC</name>
<dbReference type="EMBL" id="CP000133">
    <property type="protein sequence ID" value="ABC92064.1"/>
    <property type="molecule type" value="Genomic_DNA"/>
</dbReference>
<dbReference type="RefSeq" id="WP_011426534.1">
    <property type="nucleotide sequence ID" value="NC_007761.1"/>
</dbReference>
<dbReference type="SMR" id="Q2K522"/>
<dbReference type="KEGG" id="ret:RHE_CH03300"/>
<dbReference type="eggNOG" id="COG0378">
    <property type="taxonomic scope" value="Bacteria"/>
</dbReference>
<dbReference type="HOGENOM" id="CLU_072144_1_0_5"/>
<dbReference type="OrthoDB" id="9802035at2"/>
<dbReference type="Proteomes" id="UP000001936">
    <property type="component" value="Chromosome"/>
</dbReference>
<dbReference type="GO" id="GO:0005737">
    <property type="term" value="C:cytoplasm"/>
    <property type="evidence" value="ECO:0007669"/>
    <property type="project" value="UniProtKB-SubCell"/>
</dbReference>
<dbReference type="GO" id="GO:0005525">
    <property type="term" value="F:GTP binding"/>
    <property type="evidence" value="ECO:0007669"/>
    <property type="project" value="UniProtKB-KW"/>
</dbReference>
<dbReference type="GO" id="GO:0003924">
    <property type="term" value="F:GTPase activity"/>
    <property type="evidence" value="ECO:0007669"/>
    <property type="project" value="InterPro"/>
</dbReference>
<dbReference type="GO" id="GO:0016151">
    <property type="term" value="F:nickel cation binding"/>
    <property type="evidence" value="ECO:0007669"/>
    <property type="project" value="UniProtKB-UniRule"/>
</dbReference>
<dbReference type="GO" id="GO:0043419">
    <property type="term" value="P:urea catabolic process"/>
    <property type="evidence" value="ECO:0007669"/>
    <property type="project" value="InterPro"/>
</dbReference>
<dbReference type="CDD" id="cd05540">
    <property type="entry name" value="UreG"/>
    <property type="match status" value="1"/>
</dbReference>
<dbReference type="FunFam" id="3.40.50.300:FF:000208">
    <property type="entry name" value="Urease accessory protein UreG"/>
    <property type="match status" value="1"/>
</dbReference>
<dbReference type="Gene3D" id="3.40.50.300">
    <property type="entry name" value="P-loop containing nucleotide triphosphate hydrolases"/>
    <property type="match status" value="1"/>
</dbReference>
<dbReference type="HAMAP" id="MF_01389">
    <property type="entry name" value="UreG"/>
    <property type="match status" value="1"/>
</dbReference>
<dbReference type="InterPro" id="IPR003495">
    <property type="entry name" value="CobW/HypB/UreG_nucleotide-bd"/>
</dbReference>
<dbReference type="InterPro" id="IPR027417">
    <property type="entry name" value="P-loop_NTPase"/>
</dbReference>
<dbReference type="InterPro" id="IPR004400">
    <property type="entry name" value="UreG"/>
</dbReference>
<dbReference type="NCBIfam" id="TIGR00101">
    <property type="entry name" value="ureG"/>
    <property type="match status" value="1"/>
</dbReference>
<dbReference type="PANTHER" id="PTHR31715">
    <property type="entry name" value="UREASE ACCESSORY PROTEIN G"/>
    <property type="match status" value="1"/>
</dbReference>
<dbReference type="PANTHER" id="PTHR31715:SF0">
    <property type="entry name" value="UREASE ACCESSORY PROTEIN G"/>
    <property type="match status" value="1"/>
</dbReference>
<dbReference type="Pfam" id="PF02492">
    <property type="entry name" value="cobW"/>
    <property type="match status" value="1"/>
</dbReference>
<dbReference type="PIRSF" id="PIRSF005624">
    <property type="entry name" value="Ni-bind_GTPase"/>
    <property type="match status" value="1"/>
</dbReference>
<dbReference type="SUPFAM" id="SSF52540">
    <property type="entry name" value="P-loop containing nucleoside triphosphate hydrolases"/>
    <property type="match status" value="1"/>
</dbReference>
<evidence type="ECO:0000255" key="1">
    <source>
        <dbReference type="HAMAP-Rule" id="MF_01389"/>
    </source>
</evidence>
<keyword id="KW-0143">Chaperone</keyword>
<keyword id="KW-0963">Cytoplasm</keyword>
<keyword id="KW-0342">GTP-binding</keyword>
<keyword id="KW-0996">Nickel insertion</keyword>
<keyword id="KW-0547">Nucleotide-binding</keyword>
<keyword id="KW-1185">Reference proteome</keyword>
<reference key="1">
    <citation type="journal article" date="2006" name="Proc. Natl. Acad. Sci. U.S.A.">
        <title>The partitioned Rhizobium etli genome: genetic and metabolic redundancy in seven interacting replicons.</title>
        <authorList>
            <person name="Gonzalez V."/>
            <person name="Santamaria R.I."/>
            <person name="Bustos P."/>
            <person name="Hernandez-Gonzalez I."/>
            <person name="Medrano-Soto A."/>
            <person name="Moreno-Hagelsieb G."/>
            <person name="Janga S.C."/>
            <person name="Ramirez M.A."/>
            <person name="Jimenez-Jacinto V."/>
            <person name="Collado-Vides J."/>
            <person name="Davila G."/>
        </authorList>
    </citation>
    <scope>NUCLEOTIDE SEQUENCE [LARGE SCALE GENOMIC DNA]</scope>
    <source>
        <strain>ATCC 51251 / DSM 11541 / JCM 21823 / NBRC 15573 / CFN 42</strain>
    </source>
</reference>
<protein>
    <recommendedName>
        <fullName evidence="1">Urease accessory protein UreG</fullName>
    </recommendedName>
</protein>